<organism>
    <name type="scientific">Drosophila grimshawi</name>
    <name type="common">Hawaiian fruit fly</name>
    <name type="synonym">Idiomyia grimshawi</name>
    <dbReference type="NCBI Taxonomy" id="7222"/>
    <lineage>
        <taxon>Eukaryota</taxon>
        <taxon>Metazoa</taxon>
        <taxon>Ecdysozoa</taxon>
        <taxon>Arthropoda</taxon>
        <taxon>Hexapoda</taxon>
        <taxon>Insecta</taxon>
        <taxon>Pterygota</taxon>
        <taxon>Neoptera</taxon>
        <taxon>Endopterygota</taxon>
        <taxon>Diptera</taxon>
        <taxon>Brachycera</taxon>
        <taxon>Muscomorpha</taxon>
        <taxon>Ephydroidea</taxon>
        <taxon>Drosophilidae</taxon>
        <taxon>Drosophila</taxon>
        <taxon>Hawaiian Drosophila</taxon>
    </lineage>
</organism>
<feature type="chain" id="PRO_0000368242" description="Cytoplasmic tRNA 2-thiolation protein 1">
    <location>
        <begin position="1"/>
        <end position="343"/>
    </location>
</feature>
<gene>
    <name type="ORF">GH20281</name>
</gene>
<keyword id="KW-0963">Cytoplasm</keyword>
<keyword id="KW-1185">Reference proteome</keyword>
<keyword id="KW-0694">RNA-binding</keyword>
<keyword id="KW-0808">Transferase</keyword>
<keyword id="KW-0819">tRNA processing</keyword>
<keyword id="KW-0820">tRNA-binding</keyword>
<evidence type="ECO:0000255" key="1">
    <source>
        <dbReference type="HAMAP-Rule" id="MF_03053"/>
    </source>
</evidence>
<protein>
    <recommendedName>
        <fullName evidence="1">Cytoplasmic tRNA 2-thiolation protein 1</fullName>
        <ecNumber evidence="1">2.7.7.-</ecNumber>
    </recommendedName>
    <alternativeName>
        <fullName evidence="1">Cytoplasmic tRNA adenylyltransferase 1</fullName>
    </alternativeName>
</protein>
<sequence length="343" mass="38507">MPIDCKAKCGNKAALKRPKTGDALCKDCFFAAFEAEIHHTIVSSRLFRRGEKVAVAASGGKDSTVLAHVMKLLNERHDYGLDLVLLSIDEGITGYRDDSLETVKQNRDDYQMPLKILSYEELYGWTMDRIVAQIGRSNNCTFCGVFRRQALDRGAKLLGVDSIATGHNADDIAETVLMNILRGDTARLRRCTNIRTGGGEDSIPRVKPLKYSYEKEIVMYAHYKRLVYFSTECVFAPNAYRGHARAFLKDLEKVRPSVIMDIIYSGEQLRFKDTAKKPVRGICERCGFVSSQQPCKACVLLEGLNRGLPKLGIGKKSKGDRMIAQQNQELALRERANLVKNDF</sequence>
<comment type="function">
    <text evidence="1">Plays a central role in 2-thiolation of mcm(5)S(2)U at tRNA wobble positions of tRNA(Lys), tRNA(Glu) and tRNA(Gln). Directly binds tRNAs and probably acts by catalyzing adenylation of tRNAs, an intermediate required for 2-thiolation. It is unclear whether it acts as a sulfurtransferase that transfers sulfur from thiocarboxylated URM1 onto the uridine of tRNAs at wobble position.</text>
</comment>
<comment type="pathway">
    <text evidence="1">tRNA modification; 5-methoxycarbonylmethyl-2-thiouridine-tRNA biosynthesis.</text>
</comment>
<comment type="subcellular location">
    <subcellularLocation>
        <location evidence="1">Cytoplasm</location>
    </subcellularLocation>
</comment>
<comment type="similarity">
    <text evidence="1">Belongs to the TtcA family. CTU1/NCS6/ATPBD3 subfamily.</text>
</comment>
<accession>B4J5B3</accession>
<proteinExistence type="inferred from homology"/>
<name>CTU1_DROGR</name>
<reference key="1">
    <citation type="journal article" date="2007" name="Nature">
        <title>Evolution of genes and genomes on the Drosophila phylogeny.</title>
        <authorList>
            <consortium name="Drosophila 12 genomes consortium"/>
        </authorList>
    </citation>
    <scope>NUCLEOTIDE SEQUENCE [LARGE SCALE GENOMIC DNA]</scope>
    <source>
        <strain>Tucson 15287-2541.00</strain>
    </source>
</reference>
<dbReference type="EC" id="2.7.7.-" evidence="1"/>
<dbReference type="EMBL" id="CH916367">
    <property type="protein sequence ID" value="EDW01755.1"/>
    <property type="molecule type" value="Genomic_DNA"/>
</dbReference>
<dbReference type="SMR" id="B4J5B3"/>
<dbReference type="FunCoup" id="B4J5B3">
    <property type="interactions" value="431"/>
</dbReference>
<dbReference type="STRING" id="7222.B4J5B3"/>
<dbReference type="EnsemblMetazoa" id="FBtr0155695">
    <property type="protein sequence ID" value="FBpp0154187"/>
    <property type="gene ID" value="FBgn0127745"/>
</dbReference>
<dbReference type="EnsemblMetazoa" id="XM_001986852.2">
    <property type="protein sequence ID" value="XP_001986888.1"/>
    <property type="gene ID" value="LOC6560206"/>
</dbReference>
<dbReference type="GeneID" id="6560206"/>
<dbReference type="KEGG" id="dgr:6560206"/>
<dbReference type="CTD" id="90353"/>
<dbReference type="eggNOG" id="KOG2840">
    <property type="taxonomic scope" value="Eukaryota"/>
</dbReference>
<dbReference type="HOGENOM" id="CLU_026481_1_2_1"/>
<dbReference type="InParanoid" id="B4J5B3"/>
<dbReference type="OMA" id="KPVRGIC"/>
<dbReference type="OrthoDB" id="198857at2759"/>
<dbReference type="PhylomeDB" id="B4J5B3"/>
<dbReference type="UniPathway" id="UPA00988"/>
<dbReference type="Proteomes" id="UP000001070">
    <property type="component" value="Unassembled WGS sequence"/>
</dbReference>
<dbReference type="GO" id="GO:0005829">
    <property type="term" value="C:cytosol"/>
    <property type="evidence" value="ECO:0000250"/>
    <property type="project" value="UniProtKB"/>
</dbReference>
<dbReference type="GO" id="GO:0002144">
    <property type="term" value="C:cytosolic tRNA wobble base thiouridylase complex"/>
    <property type="evidence" value="ECO:0007669"/>
    <property type="project" value="TreeGrafter"/>
</dbReference>
<dbReference type="GO" id="GO:0005739">
    <property type="term" value="C:mitochondrion"/>
    <property type="evidence" value="ECO:0007669"/>
    <property type="project" value="TreeGrafter"/>
</dbReference>
<dbReference type="GO" id="GO:0016779">
    <property type="term" value="F:nucleotidyltransferase activity"/>
    <property type="evidence" value="ECO:0007669"/>
    <property type="project" value="UniProtKB-UniRule"/>
</dbReference>
<dbReference type="GO" id="GO:0000049">
    <property type="term" value="F:tRNA binding"/>
    <property type="evidence" value="ECO:0000250"/>
    <property type="project" value="UniProtKB"/>
</dbReference>
<dbReference type="GO" id="GO:0032447">
    <property type="term" value="P:protein urmylation"/>
    <property type="evidence" value="ECO:0007669"/>
    <property type="project" value="UniProtKB-UniRule"/>
</dbReference>
<dbReference type="GO" id="GO:0034227">
    <property type="term" value="P:tRNA thio-modification"/>
    <property type="evidence" value="ECO:0000250"/>
    <property type="project" value="UniProtKB"/>
</dbReference>
<dbReference type="GO" id="GO:0002143">
    <property type="term" value="P:tRNA wobble position uridine thiolation"/>
    <property type="evidence" value="ECO:0007669"/>
    <property type="project" value="TreeGrafter"/>
</dbReference>
<dbReference type="GO" id="GO:0002098">
    <property type="term" value="P:tRNA wobble uridine modification"/>
    <property type="evidence" value="ECO:0000250"/>
    <property type="project" value="UniProtKB"/>
</dbReference>
<dbReference type="CDD" id="cd01713">
    <property type="entry name" value="CTU1-like"/>
    <property type="match status" value="1"/>
</dbReference>
<dbReference type="FunFam" id="3.40.50.620:FF:000054">
    <property type="entry name" value="Cytoplasmic tRNA 2-thiolation protein 1"/>
    <property type="match status" value="1"/>
</dbReference>
<dbReference type="Gene3D" id="3.40.50.620">
    <property type="entry name" value="HUPs"/>
    <property type="match status" value="1"/>
</dbReference>
<dbReference type="HAMAP" id="MF_03053">
    <property type="entry name" value="CTU1"/>
    <property type="match status" value="1"/>
</dbReference>
<dbReference type="InterPro" id="IPR056369">
    <property type="entry name" value="CTU1-like_ATP-bd"/>
</dbReference>
<dbReference type="InterPro" id="IPR032442">
    <property type="entry name" value="CTU1_C"/>
</dbReference>
<dbReference type="InterPro" id="IPR000541">
    <property type="entry name" value="Ncs6/Tuc1/Ctu1"/>
</dbReference>
<dbReference type="InterPro" id="IPR014729">
    <property type="entry name" value="Rossmann-like_a/b/a_fold"/>
</dbReference>
<dbReference type="InterPro" id="IPR011063">
    <property type="entry name" value="TilS/TtcA_N"/>
</dbReference>
<dbReference type="InterPro" id="IPR035107">
    <property type="entry name" value="tRNA_thiolation_TtcA_Ctu1"/>
</dbReference>
<dbReference type="InterPro" id="IPR020554">
    <property type="entry name" value="UPF0021_CS"/>
</dbReference>
<dbReference type="NCBIfam" id="TIGR00269">
    <property type="entry name" value="TIGR00269 family protein"/>
    <property type="match status" value="1"/>
</dbReference>
<dbReference type="PANTHER" id="PTHR11807">
    <property type="entry name" value="ATPASES OF THE PP SUPERFAMILY-RELATED"/>
    <property type="match status" value="1"/>
</dbReference>
<dbReference type="PANTHER" id="PTHR11807:SF12">
    <property type="entry name" value="CYTOPLASMIC TRNA 2-THIOLATION PROTEIN 1"/>
    <property type="match status" value="1"/>
</dbReference>
<dbReference type="Pfam" id="PF01171">
    <property type="entry name" value="ATP_bind_3"/>
    <property type="match status" value="1"/>
</dbReference>
<dbReference type="Pfam" id="PF16503">
    <property type="entry name" value="zn-ribbon_14"/>
    <property type="match status" value="1"/>
</dbReference>
<dbReference type="PIRSF" id="PIRSF004976">
    <property type="entry name" value="ATPase_YdaO"/>
    <property type="match status" value="1"/>
</dbReference>
<dbReference type="SUPFAM" id="SSF52402">
    <property type="entry name" value="Adenine nucleotide alpha hydrolases-like"/>
    <property type="match status" value="1"/>
</dbReference>
<dbReference type="PROSITE" id="PS01263">
    <property type="entry name" value="UPF0021"/>
    <property type="match status" value="1"/>
</dbReference>